<accession>Q6FP19</accession>
<gene>
    <name type="primary">SQS1</name>
    <name type="ordered locus">CAGL0J07326g</name>
</gene>
<organism>
    <name type="scientific">Candida glabrata (strain ATCC 2001 / BCRC 20586 / JCM 3761 / NBRC 0622 / NRRL Y-65 / CBS 138)</name>
    <name type="common">Yeast</name>
    <name type="synonym">Nakaseomyces glabratus</name>
    <dbReference type="NCBI Taxonomy" id="284593"/>
    <lineage>
        <taxon>Eukaryota</taxon>
        <taxon>Fungi</taxon>
        <taxon>Dikarya</taxon>
        <taxon>Ascomycota</taxon>
        <taxon>Saccharomycotina</taxon>
        <taxon>Saccharomycetes</taxon>
        <taxon>Saccharomycetales</taxon>
        <taxon>Saccharomycetaceae</taxon>
        <taxon>Nakaseomyces</taxon>
    </lineage>
</organism>
<feature type="chain" id="PRO_0000324995" description="Protein SQS1">
    <location>
        <begin position="1"/>
        <end position="808"/>
    </location>
</feature>
<feature type="domain" description="R3H">
    <location>
        <begin position="621"/>
        <end position="683"/>
    </location>
</feature>
<feature type="domain" description="G-patch" evidence="2">
    <location>
        <begin position="748"/>
        <end position="795"/>
    </location>
</feature>
<feature type="region of interest" description="Disordered" evidence="3">
    <location>
        <begin position="1"/>
        <end position="67"/>
    </location>
</feature>
<feature type="region of interest" description="Disordered" evidence="3">
    <location>
        <begin position="151"/>
        <end position="180"/>
    </location>
</feature>
<feature type="region of interest" description="Disordered" evidence="3">
    <location>
        <begin position="485"/>
        <end position="529"/>
    </location>
</feature>
<feature type="region of interest" description="Disordered" evidence="3">
    <location>
        <begin position="764"/>
        <end position="808"/>
    </location>
</feature>
<feature type="compositionally biased region" description="Basic residues" evidence="3">
    <location>
        <begin position="1"/>
        <end position="20"/>
    </location>
</feature>
<feature type="compositionally biased region" description="Basic residues" evidence="3">
    <location>
        <begin position="28"/>
        <end position="37"/>
    </location>
</feature>
<feature type="compositionally biased region" description="Basic and acidic residues" evidence="3">
    <location>
        <begin position="39"/>
        <end position="48"/>
    </location>
</feature>
<feature type="compositionally biased region" description="Basic and acidic residues" evidence="3">
    <location>
        <begin position="153"/>
        <end position="179"/>
    </location>
</feature>
<feature type="compositionally biased region" description="Basic residues" evidence="3">
    <location>
        <begin position="782"/>
        <end position="791"/>
    </location>
</feature>
<sequence length="808" mass="92551">MAKRHKHFESRGGFRKKRGGGRGSQRGRGSKRGRGGRFRGFEETERSASEPGAWLNSSVPLGDGDLSNPDMMVDNYRPRKHISQDTITDHYFGRKSSLKLNSMRMAGLRHNDWRDPNNGNSASFRKRPIEFIKANCTYDPSRDLILQLANRSKNQESKEPEEDANKCSEYAEHSEKDMEIDTAATENDANISYDESDTDQEIGNFNHSIENSKHNNNISECDITAVTDQELFFVDEEGMDISQKPTKVVHITEHEKKMGSNVEFHNVLTVGKVEISLNQDENDEVYVDRKPTAKYHPFHNYISNVIERMQEEENIDSDDFEDEDDIYLDNSGNDMPETELDQDEIIDLQRHDDKDHAVQTCAIPTNTLSNDLDTLHITESNDDRITINNHNMDSTVETDKEKDPEFGFLEEDYAVNTSEVIVDNIRLGLNDNSYFLKCYRFFGDYSFHWIDQEAFVSFLTEDLELPMNRVGAYLAYVKNSLVPDETPPSPTYSDIPFSDTSNESDEDNALPNVDAVSSCSNDDEDEELGDDVDDLVSYSLKYANSRNIDYETRALEFTGKGKKKKLLVNEQLDLDNETMETLQAKLSKRMENKAKKRRLKEDFIDKENMNSDDLFLKYPYGFHVQNIRDEFELFLTRNKDRMSFPPLDPHGNKVITKFATCYNIKSSKVGKGNHTHIMVEKVKKTKWSRPNYNMVLQLTRQRPVFMRIDVRRPKEDAIKENSGRRGPTAKFHVKEGEVVGENAPEIGQDNIGRRMLEKLGWSSGEGLGAHGNKGISIPVMARVKKSKSGLRHSKEDEDTGRSSSFRKK</sequence>
<dbReference type="EMBL" id="CR380956">
    <property type="protein sequence ID" value="CAG60976.1"/>
    <property type="molecule type" value="Genomic_DNA"/>
</dbReference>
<dbReference type="RefSeq" id="XP_448025.1">
    <property type="nucleotide sequence ID" value="XM_448025.1"/>
</dbReference>
<dbReference type="FunCoup" id="Q6FP19">
    <property type="interactions" value="305"/>
</dbReference>
<dbReference type="STRING" id="284593.Q6FP19"/>
<dbReference type="EnsemblFungi" id="CAGL0J07326g-T">
    <property type="protein sequence ID" value="CAGL0J07326g-T-p1"/>
    <property type="gene ID" value="CAGL0J07326g"/>
</dbReference>
<dbReference type="KEGG" id="cgr:2889588"/>
<dbReference type="CGD" id="CAL0133348">
    <property type="gene designation" value="CAGL0J07326g"/>
</dbReference>
<dbReference type="VEuPathDB" id="FungiDB:CAGL0J07326g"/>
<dbReference type="eggNOG" id="KOG0154">
    <property type="taxonomic scope" value="Eukaryota"/>
</dbReference>
<dbReference type="HOGENOM" id="CLU_021974_1_0_1"/>
<dbReference type="InParanoid" id="Q6FP19"/>
<dbReference type="OMA" id="PVFMRID"/>
<dbReference type="Proteomes" id="UP000002428">
    <property type="component" value="Chromosome J"/>
</dbReference>
<dbReference type="GO" id="GO:0030686">
    <property type="term" value="C:90S preribosome"/>
    <property type="evidence" value="ECO:0007669"/>
    <property type="project" value="EnsemblFungi"/>
</dbReference>
<dbReference type="GO" id="GO:0005737">
    <property type="term" value="C:cytoplasm"/>
    <property type="evidence" value="ECO:0007669"/>
    <property type="project" value="UniProtKB-SubCell"/>
</dbReference>
<dbReference type="GO" id="GO:0005634">
    <property type="term" value="C:nucleus"/>
    <property type="evidence" value="ECO:0007669"/>
    <property type="project" value="UniProtKB-SubCell"/>
</dbReference>
<dbReference type="GO" id="GO:0030687">
    <property type="term" value="C:preribosome, large subunit precursor"/>
    <property type="evidence" value="ECO:0007669"/>
    <property type="project" value="EnsemblFungi"/>
</dbReference>
<dbReference type="GO" id="GO:0030688">
    <property type="term" value="C:preribosome, small subunit precursor"/>
    <property type="evidence" value="ECO:0007669"/>
    <property type="project" value="EnsemblFungi"/>
</dbReference>
<dbReference type="GO" id="GO:0008047">
    <property type="term" value="F:enzyme activator activity"/>
    <property type="evidence" value="ECO:0007669"/>
    <property type="project" value="EnsemblFungi"/>
</dbReference>
<dbReference type="GO" id="GO:0003676">
    <property type="term" value="F:nucleic acid binding"/>
    <property type="evidence" value="ECO:0007669"/>
    <property type="project" value="InterPro"/>
</dbReference>
<dbReference type="GO" id="GO:0030490">
    <property type="term" value="P:maturation of SSU-rRNA"/>
    <property type="evidence" value="ECO:0007669"/>
    <property type="project" value="EnsemblFungi"/>
</dbReference>
<dbReference type="GO" id="GO:0000398">
    <property type="term" value="P:mRNA splicing, via spliceosome"/>
    <property type="evidence" value="ECO:0007669"/>
    <property type="project" value="EnsemblFungi"/>
</dbReference>
<dbReference type="CDD" id="cd02646">
    <property type="entry name" value="R3H_G-patch"/>
    <property type="match status" value="1"/>
</dbReference>
<dbReference type="Gene3D" id="3.30.1370.50">
    <property type="entry name" value="R3H-like domain"/>
    <property type="match status" value="1"/>
</dbReference>
<dbReference type="InterPro" id="IPR000467">
    <property type="entry name" value="G_patch_dom"/>
</dbReference>
<dbReference type="InterPro" id="IPR036867">
    <property type="entry name" value="R3H_dom_sf"/>
</dbReference>
<dbReference type="InterPro" id="IPR034082">
    <property type="entry name" value="R3H_G-patch"/>
</dbReference>
<dbReference type="InterPro" id="IPR051189">
    <property type="entry name" value="Splicing_assoc_domain"/>
</dbReference>
<dbReference type="PANTHER" id="PTHR14195">
    <property type="entry name" value="G PATCH DOMAIN CONTAINING PROTEIN 2"/>
    <property type="match status" value="1"/>
</dbReference>
<dbReference type="Pfam" id="PF01585">
    <property type="entry name" value="G-patch"/>
    <property type="match status" value="1"/>
</dbReference>
<dbReference type="SMART" id="SM00443">
    <property type="entry name" value="G_patch"/>
    <property type="match status" value="1"/>
</dbReference>
<dbReference type="SUPFAM" id="SSF82708">
    <property type="entry name" value="R3H domain"/>
    <property type="match status" value="1"/>
</dbReference>
<dbReference type="PROSITE" id="PS50174">
    <property type="entry name" value="G_PATCH"/>
    <property type="match status" value="1"/>
</dbReference>
<keyword id="KW-0963">Cytoplasm</keyword>
<keyword id="KW-0507">mRNA processing</keyword>
<keyword id="KW-0508">mRNA splicing</keyword>
<keyword id="KW-0539">Nucleus</keyword>
<keyword id="KW-1185">Reference proteome</keyword>
<comment type="function">
    <text evidence="1">May be involved in splicing.</text>
</comment>
<comment type="subcellular location">
    <subcellularLocation>
        <location evidence="1">Cytoplasm</location>
    </subcellularLocation>
    <subcellularLocation>
        <location evidence="1">Nucleus</location>
    </subcellularLocation>
</comment>
<comment type="similarity">
    <text evidence="4">Belongs to the SQS1 family.</text>
</comment>
<reference key="1">
    <citation type="journal article" date="2004" name="Nature">
        <title>Genome evolution in yeasts.</title>
        <authorList>
            <person name="Dujon B."/>
            <person name="Sherman D."/>
            <person name="Fischer G."/>
            <person name="Durrens P."/>
            <person name="Casaregola S."/>
            <person name="Lafontaine I."/>
            <person name="de Montigny J."/>
            <person name="Marck C."/>
            <person name="Neuveglise C."/>
            <person name="Talla E."/>
            <person name="Goffard N."/>
            <person name="Frangeul L."/>
            <person name="Aigle M."/>
            <person name="Anthouard V."/>
            <person name="Babour A."/>
            <person name="Barbe V."/>
            <person name="Barnay S."/>
            <person name="Blanchin S."/>
            <person name="Beckerich J.-M."/>
            <person name="Beyne E."/>
            <person name="Bleykasten C."/>
            <person name="Boisrame A."/>
            <person name="Boyer J."/>
            <person name="Cattolico L."/>
            <person name="Confanioleri F."/>
            <person name="de Daruvar A."/>
            <person name="Despons L."/>
            <person name="Fabre E."/>
            <person name="Fairhead C."/>
            <person name="Ferry-Dumazet H."/>
            <person name="Groppi A."/>
            <person name="Hantraye F."/>
            <person name="Hennequin C."/>
            <person name="Jauniaux N."/>
            <person name="Joyet P."/>
            <person name="Kachouri R."/>
            <person name="Kerrest A."/>
            <person name="Koszul R."/>
            <person name="Lemaire M."/>
            <person name="Lesur I."/>
            <person name="Ma L."/>
            <person name="Muller H."/>
            <person name="Nicaud J.-M."/>
            <person name="Nikolski M."/>
            <person name="Oztas S."/>
            <person name="Ozier-Kalogeropoulos O."/>
            <person name="Pellenz S."/>
            <person name="Potier S."/>
            <person name="Richard G.-F."/>
            <person name="Straub M.-L."/>
            <person name="Suleau A."/>
            <person name="Swennen D."/>
            <person name="Tekaia F."/>
            <person name="Wesolowski-Louvel M."/>
            <person name="Westhof E."/>
            <person name="Wirth B."/>
            <person name="Zeniou-Meyer M."/>
            <person name="Zivanovic Y."/>
            <person name="Bolotin-Fukuhara M."/>
            <person name="Thierry A."/>
            <person name="Bouchier C."/>
            <person name="Caudron B."/>
            <person name="Scarpelli C."/>
            <person name="Gaillardin C."/>
            <person name="Weissenbach J."/>
            <person name="Wincker P."/>
            <person name="Souciet J.-L."/>
        </authorList>
    </citation>
    <scope>NUCLEOTIDE SEQUENCE [LARGE SCALE GENOMIC DNA]</scope>
    <source>
        <strain>ATCC 2001 / BCRC 20586 / JCM 3761 / NBRC 0622 / NRRL Y-65 / CBS 138</strain>
    </source>
</reference>
<name>SQS1_CANGA</name>
<proteinExistence type="inferred from homology"/>
<protein>
    <recommendedName>
        <fullName>Protein SQS1</fullName>
    </recommendedName>
</protein>
<evidence type="ECO:0000250" key="1"/>
<evidence type="ECO:0000255" key="2">
    <source>
        <dbReference type="PROSITE-ProRule" id="PRU00092"/>
    </source>
</evidence>
<evidence type="ECO:0000256" key="3">
    <source>
        <dbReference type="SAM" id="MobiDB-lite"/>
    </source>
</evidence>
<evidence type="ECO:0000305" key="4"/>